<protein>
    <recommendedName>
        <fullName>E3 ubiquitin-protein ligase SMURF2</fullName>
        <ecNumber evidence="2">2.3.2.26</ecNumber>
    </recommendedName>
    <alternativeName>
        <fullName>HECT-type E3 ubiquitin transferase SMURF2</fullName>
    </alternativeName>
    <alternativeName>
        <fullName>SMAD ubiquitination regulatory factor 2</fullName>
    </alternativeName>
    <alternativeName>
        <fullName>SMAD-specific E3 ubiquitin-protein ligase 2</fullName>
    </alternativeName>
</protein>
<sequence length="748" mass="86175">MSNPGGRRNGPVKLRLTVLCAKNLVKKDFFRLPDPFAKVVVDGSGQCHSTDTVKNTLDPKWNQHYDLYIGKSDSVTISVWNHKKIHKKQGAGFLGCVRLLSNAINRLKDTGYQRLDLCKLGPNDNDTVRGQIVVSLQSRDRIGTGGQVVDCSRLFDNDLPDGWEERRTASGRIQYLNHITRTTQWERPTRPASEYSSPGRPLSCFVDENTPITGTNGATCGHSSDPRLAERRVRSQRHRNYMSRTHLHTPPDLPEGYEQRTTQQGQVYFLHTQTGVSTWHDPRVPRDLSNINCEELGPLPPGWEIRNTATGRVYFVDHNNRTTQFTDPRLSANLHLVLNRQNQLKDQQQQQVVPLCPDDTECLTVPRYKRDLVQKLKILRQELSQQQPQAGHCRIEVSREEIFEESYRQVMKMRPKDLWKRLMIKFRGEEGLDYGGVAREWLYLLSHEMLNPYYGLFQYSRDDIYTLQINPDSAVNPEHLSYFHFVGRIMGMAVFHGHYIDGGFTLPFYKQLLGKSITLDDMELVDPDLHNSLVWILENDITGVLDHTFCVEHNAYGEIIQHELKPNGKSIPVTEENKKEYVRLYVNWRFLRGIEAQFLALQKGFNEVIPQHLLKTFDEKELELIICGLGKIDVSDWKVNTRLKHCTPDSNVVKWFWKAVEFFDEERRARLLQFVTGSSRVPLQGFKALQGAAGPRLFTIHQIDACTNNLPKAHTCFNRIDIPPYESYEKLYEKLLTAIEETCGFAVE</sequence>
<reference key="1">
    <citation type="journal article" date="2005" name="Cell">
        <title>Ubiquitin ligase Smurf1 controls osteoblast activity and bone homeostasis by targeting MEKK2 for degradation.</title>
        <authorList>
            <person name="Yamashita M."/>
            <person name="Ying S.X."/>
            <person name="Zhang G.M."/>
            <person name="Li C."/>
            <person name="Cheng S.Y."/>
            <person name="Deng C.X."/>
            <person name="Zhang Y.E."/>
        </authorList>
    </citation>
    <scope>NUCLEOTIDE SEQUENCE [MRNA] (ISOFORM 1)</scope>
    <source>
        <strain>129/SvJ</strain>
    </source>
</reference>
<reference key="2">
    <citation type="journal article" date="2009" name="PLoS Biol.">
        <title>Lineage-specific biology revealed by a finished genome assembly of the mouse.</title>
        <authorList>
            <person name="Church D.M."/>
            <person name="Goodstadt L."/>
            <person name="Hillier L.W."/>
            <person name="Zody M.C."/>
            <person name="Goldstein S."/>
            <person name="She X."/>
            <person name="Bult C.J."/>
            <person name="Agarwala R."/>
            <person name="Cherry J.L."/>
            <person name="DiCuccio M."/>
            <person name="Hlavina W."/>
            <person name="Kapustin Y."/>
            <person name="Meric P."/>
            <person name="Maglott D."/>
            <person name="Birtle Z."/>
            <person name="Marques A.C."/>
            <person name="Graves T."/>
            <person name="Zhou S."/>
            <person name="Teague B."/>
            <person name="Potamousis K."/>
            <person name="Churas C."/>
            <person name="Place M."/>
            <person name="Herschleb J."/>
            <person name="Runnheim R."/>
            <person name="Forrest D."/>
            <person name="Amos-Landgraf J."/>
            <person name="Schwartz D.C."/>
            <person name="Cheng Z."/>
            <person name="Lindblad-Toh K."/>
            <person name="Eichler E.E."/>
            <person name="Ponting C.P."/>
        </authorList>
    </citation>
    <scope>NUCLEOTIDE SEQUENCE [LARGE SCALE GENOMIC DNA]</scope>
    <source>
        <strain>C57BL/6J</strain>
    </source>
</reference>
<reference key="3">
    <citation type="submission" date="2005-07" db="EMBL/GenBank/DDBJ databases">
        <authorList>
            <person name="Mural R.J."/>
            <person name="Adams M.D."/>
            <person name="Myers E.W."/>
            <person name="Smith H.O."/>
            <person name="Venter J.C."/>
        </authorList>
    </citation>
    <scope>NUCLEOTIDE SEQUENCE [LARGE SCALE GENOMIC DNA]</scope>
</reference>
<reference key="4">
    <citation type="journal article" date="2004" name="Genome Res.">
        <title>The status, quality, and expansion of the NIH full-length cDNA project: the Mammalian Gene Collection (MGC).</title>
        <authorList>
            <consortium name="The MGC Project Team"/>
        </authorList>
    </citation>
    <scope>NUCLEOTIDE SEQUENCE [LARGE SCALE MRNA] (ISOFORM 1)</scope>
    <source>
        <tissue>Lung</tissue>
    </source>
</reference>
<reference key="5">
    <citation type="journal article" date="2006" name="J. Biol. Chem.">
        <title>Tumor necrosis factor promotes Runx2 degradation through up-regulation of Smurf1 and Smurf2 in osteoblasts.</title>
        <authorList>
            <person name="Kaneki H."/>
            <person name="Guo R."/>
            <person name="Chen D."/>
            <person name="Yao Z."/>
            <person name="Schwarz E.M."/>
            <person name="Zhang Y.E."/>
            <person name="Boyce B.F."/>
            <person name="Xing L."/>
        </authorList>
    </citation>
    <scope>INDUCTION BY TNF SIGNALING PATHWAY ACTIVATION</scope>
</reference>
<reference key="6">
    <citation type="journal article" date="2008" name="Biochem. Biophys. Res. Commun.">
        <title>AIMP1/p43 downregulates TGF-beta signaling via stabilization of smurf2.</title>
        <authorList>
            <person name="Lee Y.S."/>
            <person name="Han J.M."/>
            <person name="Son S.H."/>
            <person name="Choi J.W."/>
            <person name="Jeon E.J."/>
            <person name="Bae S.-C."/>
            <person name="Park Y.I."/>
            <person name="Kim S."/>
        </authorList>
    </citation>
    <scope>STABILIZATION BY AIMP1</scope>
</reference>
<evidence type="ECO:0000250" key="1"/>
<evidence type="ECO:0000250" key="2">
    <source>
        <dbReference type="UniProtKB" id="Q9HAU4"/>
    </source>
</evidence>
<evidence type="ECO:0000255" key="3">
    <source>
        <dbReference type="PROSITE-ProRule" id="PRU00041"/>
    </source>
</evidence>
<evidence type="ECO:0000255" key="4">
    <source>
        <dbReference type="PROSITE-ProRule" id="PRU00104"/>
    </source>
</evidence>
<evidence type="ECO:0000255" key="5">
    <source>
        <dbReference type="PROSITE-ProRule" id="PRU00224"/>
    </source>
</evidence>
<evidence type="ECO:0000269" key="6">
    <source>
    </source>
</evidence>
<evidence type="ECO:0000269" key="7">
    <source>
    </source>
</evidence>
<evidence type="ECO:0000305" key="8"/>
<evidence type="ECO:0000312" key="9">
    <source>
        <dbReference type="MGI" id="MGI:1913563"/>
    </source>
</evidence>
<keyword id="KW-0025">Alternative splicing</keyword>
<keyword id="KW-1003">Cell membrane</keyword>
<keyword id="KW-0963">Cytoplasm</keyword>
<keyword id="KW-1017">Isopeptide bond</keyword>
<keyword id="KW-0472">Membrane</keyword>
<keyword id="KW-0539">Nucleus</keyword>
<keyword id="KW-1185">Reference proteome</keyword>
<keyword id="KW-0677">Repeat</keyword>
<keyword id="KW-0808">Transferase</keyword>
<keyword id="KW-0832">Ubl conjugation</keyword>
<keyword id="KW-0833">Ubl conjugation pathway</keyword>
<proteinExistence type="evidence at protein level"/>
<dbReference type="EC" id="2.3.2.26" evidence="2"/>
<dbReference type="EMBL" id="AY685230">
    <property type="protein sequence ID" value="AAV87906.1"/>
    <property type="molecule type" value="mRNA"/>
</dbReference>
<dbReference type="EMBL" id="AL593847">
    <property type="status" value="NOT_ANNOTATED_CDS"/>
    <property type="molecule type" value="Genomic_DNA"/>
</dbReference>
<dbReference type="EMBL" id="CH466558">
    <property type="protein sequence ID" value="EDL34316.1"/>
    <property type="molecule type" value="Genomic_DNA"/>
</dbReference>
<dbReference type="EMBL" id="BC138786">
    <property type="protein sequence ID" value="AAI38787.1"/>
    <property type="molecule type" value="mRNA"/>
</dbReference>
<dbReference type="EMBL" id="BC138788">
    <property type="protein sequence ID" value="AAI38789.1"/>
    <property type="molecule type" value="mRNA"/>
</dbReference>
<dbReference type="CCDS" id="CCDS25564.1">
    <molecule id="A2A5Z6-1"/>
</dbReference>
<dbReference type="RefSeq" id="NP_079757.2">
    <molecule id="A2A5Z6-1"/>
    <property type="nucleotide sequence ID" value="NM_025481.3"/>
</dbReference>
<dbReference type="RefSeq" id="XP_006533999.1">
    <molecule id="A2A5Z6-2"/>
    <property type="nucleotide sequence ID" value="XM_006533936.4"/>
</dbReference>
<dbReference type="BMRB" id="A2A5Z6"/>
<dbReference type="SMR" id="A2A5Z6"/>
<dbReference type="BioGRID" id="211376">
    <property type="interactions" value="26"/>
</dbReference>
<dbReference type="FunCoup" id="A2A5Z6">
    <property type="interactions" value="3320"/>
</dbReference>
<dbReference type="IntAct" id="A2A5Z6">
    <property type="interactions" value="16"/>
</dbReference>
<dbReference type="STRING" id="10090.ENSMUSP00000090177"/>
<dbReference type="iPTMnet" id="A2A5Z6"/>
<dbReference type="PhosphoSitePlus" id="A2A5Z6"/>
<dbReference type="PaxDb" id="10090-ENSMUSP00000090177"/>
<dbReference type="PeptideAtlas" id="A2A5Z6"/>
<dbReference type="ProteomicsDB" id="257529">
    <molecule id="A2A5Z6-1"/>
</dbReference>
<dbReference type="ProteomicsDB" id="257530">
    <molecule id="A2A5Z6-2"/>
</dbReference>
<dbReference type="Pumba" id="A2A5Z6"/>
<dbReference type="Antibodypedia" id="31598">
    <property type="antibodies" value="345 antibodies from 35 providers"/>
</dbReference>
<dbReference type="Ensembl" id="ENSMUST00000092517.9">
    <molecule id="A2A5Z6-1"/>
    <property type="protein sequence ID" value="ENSMUSP00000090177.3"/>
    <property type="gene ID" value="ENSMUSG00000018363.18"/>
</dbReference>
<dbReference type="Ensembl" id="ENSMUST00000103067.10">
    <molecule id="A2A5Z6-2"/>
    <property type="protein sequence ID" value="ENSMUSP00000099356.4"/>
    <property type="gene ID" value="ENSMUSG00000018363.18"/>
</dbReference>
<dbReference type="GeneID" id="66313"/>
<dbReference type="KEGG" id="mmu:66313"/>
<dbReference type="UCSC" id="uc007lzx.2">
    <molecule id="A2A5Z6-1"/>
    <property type="organism name" value="mouse"/>
</dbReference>
<dbReference type="UCSC" id="uc007lzy.2">
    <molecule id="A2A5Z6-2"/>
    <property type="organism name" value="mouse"/>
</dbReference>
<dbReference type="AGR" id="MGI:1913563"/>
<dbReference type="CTD" id="64750"/>
<dbReference type="MGI" id="MGI:1913563">
    <property type="gene designation" value="Smurf2"/>
</dbReference>
<dbReference type="VEuPathDB" id="HostDB:ENSMUSG00000018363"/>
<dbReference type="eggNOG" id="KOG0940">
    <property type="taxonomic scope" value="Eukaryota"/>
</dbReference>
<dbReference type="GeneTree" id="ENSGT00940000155563"/>
<dbReference type="HOGENOM" id="CLU_002173_1_1_1"/>
<dbReference type="InParanoid" id="A2A5Z6"/>
<dbReference type="OMA" id="LIFLICE"/>
<dbReference type="OrthoDB" id="8068875at2759"/>
<dbReference type="PhylomeDB" id="A2A5Z6"/>
<dbReference type="TreeFam" id="TF323658"/>
<dbReference type="BRENDA" id="2.3.2.26">
    <property type="organism ID" value="3474"/>
</dbReference>
<dbReference type="Reactome" id="R-MMU-201451">
    <property type="pathway name" value="Signaling by BMP"/>
</dbReference>
<dbReference type="Reactome" id="R-MMU-2173788">
    <property type="pathway name" value="Downregulation of TGF-beta receptor signaling"/>
</dbReference>
<dbReference type="Reactome" id="R-MMU-2173795">
    <property type="pathway name" value="Downregulation of SMAD2/3:SMAD4 transcriptional activity"/>
</dbReference>
<dbReference type="Reactome" id="R-MMU-4608870">
    <property type="pathway name" value="Asymmetric localization of PCP proteins"/>
</dbReference>
<dbReference type="Reactome" id="R-MMU-4641257">
    <property type="pathway name" value="Degradation of AXIN"/>
</dbReference>
<dbReference type="Reactome" id="R-MMU-5632684">
    <property type="pathway name" value="Hedgehog 'on' state"/>
</dbReference>
<dbReference type="Reactome" id="R-MMU-5689880">
    <property type="pathway name" value="Ub-specific processing proteases"/>
</dbReference>
<dbReference type="Reactome" id="R-MMU-8941858">
    <property type="pathway name" value="Regulation of RUNX3 expression and activity"/>
</dbReference>
<dbReference type="Reactome" id="R-MMU-983168">
    <property type="pathway name" value="Antigen processing: Ubiquitination &amp; Proteasome degradation"/>
</dbReference>
<dbReference type="UniPathway" id="UPA00143"/>
<dbReference type="BioGRID-ORCS" id="66313">
    <property type="hits" value="3 hits in 80 CRISPR screens"/>
</dbReference>
<dbReference type="ChiTaRS" id="Smurf2">
    <property type="organism name" value="mouse"/>
</dbReference>
<dbReference type="PRO" id="PR:A2A5Z6"/>
<dbReference type="Proteomes" id="UP000000589">
    <property type="component" value="Chromosome 11"/>
</dbReference>
<dbReference type="RNAct" id="A2A5Z6">
    <property type="molecule type" value="protein"/>
</dbReference>
<dbReference type="Bgee" id="ENSMUSG00000018363">
    <property type="expression patterns" value="Expressed in cleaving embryo and 222 other cell types or tissues"/>
</dbReference>
<dbReference type="ExpressionAtlas" id="A2A5Z6">
    <property type="expression patterns" value="baseline and differential"/>
</dbReference>
<dbReference type="GO" id="GO:0005829">
    <property type="term" value="C:cytosol"/>
    <property type="evidence" value="ECO:0000304"/>
    <property type="project" value="Reactome"/>
</dbReference>
<dbReference type="GO" id="GO:0045121">
    <property type="term" value="C:membrane raft"/>
    <property type="evidence" value="ECO:0007669"/>
    <property type="project" value="UniProtKB-SubCell"/>
</dbReference>
<dbReference type="GO" id="GO:0016607">
    <property type="term" value="C:nuclear speck"/>
    <property type="evidence" value="ECO:0007669"/>
    <property type="project" value="Ensembl"/>
</dbReference>
<dbReference type="GO" id="GO:0005886">
    <property type="term" value="C:plasma membrane"/>
    <property type="evidence" value="ECO:0007669"/>
    <property type="project" value="UniProtKB-SubCell"/>
</dbReference>
<dbReference type="GO" id="GO:0000151">
    <property type="term" value="C:ubiquitin ligase complex"/>
    <property type="evidence" value="ECO:0007669"/>
    <property type="project" value="Ensembl"/>
</dbReference>
<dbReference type="GO" id="GO:0042802">
    <property type="term" value="F:identical protein binding"/>
    <property type="evidence" value="ECO:0007669"/>
    <property type="project" value="Ensembl"/>
</dbReference>
<dbReference type="GO" id="GO:0046332">
    <property type="term" value="F:SMAD binding"/>
    <property type="evidence" value="ECO:0007669"/>
    <property type="project" value="Ensembl"/>
</dbReference>
<dbReference type="GO" id="GO:0061630">
    <property type="term" value="F:ubiquitin protein ligase activity"/>
    <property type="evidence" value="ECO:0000304"/>
    <property type="project" value="Reactome"/>
</dbReference>
<dbReference type="GO" id="GO:0030512">
    <property type="term" value="P:negative regulation of transforming growth factor beta receptor signaling pathway"/>
    <property type="evidence" value="ECO:0007669"/>
    <property type="project" value="Ensembl"/>
</dbReference>
<dbReference type="GO" id="GO:1901165">
    <property type="term" value="P:positive regulation of trophoblast cell migration"/>
    <property type="evidence" value="ECO:0007669"/>
    <property type="project" value="Ensembl"/>
</dbReference>
<dbReference type="GO" id="GO:0016567">
    <property type="term" value="P:protein ubiquitination"/>
    <property type="evidence" value="ECO:0007669"/>
    <property type="project" value="UniProtKB-UniPathway"/>
</dbReference>
<dbReference type="GO" id="GO:0006511">
    <property type="term" value="P:ubiquitin-dependent protein catabolic process"/>
    <property type="evidence" value="ECO:0007669"/>
    <property type="project" value="Ensembl"/>
</dbReference>
<dbReference type="CDD" id="cd08382">
    <property type="entry name" value="C2_Smurf-like"/>
    <property type="match status" value="1"/>
</dbReference>
<dbReference type="CDD" id="cd00078">
    <property type="entry name" value="HECTc"/>
    <property type="match status" value="1"/>
</dbReference>
<dbReference type="CDD" id="cd00201">
    <property type="entry name" value="WW"/>
    <property type="match status" value="3"/>
</dbReference>
<dbReference type="FunFam" id="2.20.70.10:FF:000017">
    <property type="entry name" value="E3 ubiquitin-protein ligase"/>
    <property type="match status" value="1"/>
</dbReference>
<dbReference type="FunFam" id="2.20.70.10:FF:000026">
    <property type="entry name" value="E3 ubiquitin-protein ligase"/>
    <property type="match status" value="1"/>
</dbReference>
<dbReference type="FunFam" id="2.20.70.10:FF:000047">
    <property type="entry name" value="E3 ubiquitin-protein ligase"/>
    <property type="match status" value="1"/>
</dbReference>
<dbReference type="FunFam" id="2.60.40.150:FF:000024">
    <property type="entry name" value="E3 ubiquitin-protein ligase"/>
    <property type="match status" value="1"/>
</dbReference>
<dbReference type="FunFam" id="3.30.2160.10:FF:000001">
    <property type="entry name" value="E3 ubiquitin-protein ligase NEDD4-like"/>
    <property type="match status" value="1"/>
</dbReference>
<dbReference type="FunFam" id="3.30.2410.10:FF:000014">
    <property type="entry name" value="E3 ubiquitin-protein ligase SMURF1"/>
    <property type="match status" value="1"/>
</dbReference>
<dbReference type="FunFam" id="3.90.1750.10:FF:000007">
    <property type="entry name" value="E3 ubiquitin-protein ligase SMURF2"/>
    <property type="match status" value="1"/>
</dbReference>
<dbReference type="Gene3D" id="2.20.70.10">
    <property type="match status" value="2"/>
</dbReference>
<dbReference type="Gene3D" id="2.60.40.150">
    <property type="entry name" value="C2 domain"/>
    <property type="match status" value="1"/>
</dbReference>
<dbReference type="Gene3D" id="3.30.2160.10">
    <property type="entry name" value="Hect, E3 ligase catalytic domain"/>
    <property type="match status" value="1"/>
</dbReference>
<dbReference type="Gene3D" id="3.30.2410.10">
    <property type="entry name" value="Hect, E3 ligase catalytic domain"/>
    <property type="match status" value="1"/>
</dbReference>
<dbReference type="Gene3D" id="3.90.1750.10">
    <property type="entry name" value="Hect, E3 ligase catalytic domains"/>
    <property type="match status" value="1"/>
</dbReference>
<dbReference type="InterPro" id="IPR000008">
    <property type="entry name" value="C2_dom"/>
</dbReference>
<dbReference type="InterPro" id="IPR035892">
    <property type="entry name" value="C2_domain_sf"/>
</dbReference>
<dbReference type="InterPro" id="IPR024928">
    <property type="entry name" value="E3_ub_ligase_SMURF1"/>
</dbReference>
<dbReference type="InterPro" id="IPR050409">
    <property type="entry name" value="E3_ubiq-protein_ligase"/>
</dbReference>
<dbReference type="InterPro" id="IPR000569">
    <property type="entry name" value="HECT_dom"/>
</dbReference>
<dbReference type="InterPro" id="IPR035983">
    <property type="entry name" value="Hect_E3_ubiquitin_ligase"/>
</dbReference>
<dbReference type="InterPro" id="IPR001202">
    <property type="entry name" value="WW_dom"/>
</dbReference>
<dbReference type="InterPro" id="IPR036020">
    <property type="entry name" value="WW_dom_sf"/>
</dbReference>
<dbReference type="PANTHER" id="PTHR11254:SF300">
    <property type="entry name" value="E3 UBIQUITIN-PROTEIN LIGASE SMURF2"/>
    <property type="match status" value="1"/>
</dbReference>
<dbReference type="PANTHER" id="PTHR11254">
    <property type="entry name" value="HECT DOMAIN UBIQUITIN-PROTEIN LIGASE"/>
    <property type="match status" value="1"/>
</dbReference>
<dbReference type="Pfam" id="PF00168">
    <property type="entry name" value="C2"/>
    <property type="match status" value="1"/>
</dbReference>
<dbReference type="Pfam" id="PF00632">
    <property type="entry name" value="HECT"/>
    <property type="match status" value="1"/>
</dbReference>
<dbReference type="Pfam" id="PF00397">
    <property type="entry name" value="WW"/>
    <property type="match status" value="3"/>
</dbReference>
<dbReference type="PIRSF" id="PIRSF001569">
    <property type="entry name" value="E3_ub_ligase_SMURF1"/>
    <property type="match status" value="1"/>
</dbReference>
<dbReference type="SMART" id="SM00239">
    <property type="entry name" value="C2"/>
    <property type="match status" value="1"/>
</dbReference>
<dbReference type="SMART" id="SM00119">
    <property type="entry name" value="HECTc"/>
    <property type="match status" value="1"/>
</dbReference>
<dbReference type="SMART" id="SM00456">
    <property type="entry name" value="WW"/>
    <property type="match status" value="3"/>
</dbReference>
<dbReference type="SUPFAM" id="SSF49562">
    <property type="entry name" value="C2 domain (Calcium/lipid-binding domain, CaLB)"/>
    <property type="match status" value="1"/>
</dbReference>
<dbReference type="SUPFAM" id="SSF56204">
    <property type="entry name" value="Hect, E3 ligase catalytic domain"/>
    <property type="match status" value="1"/>
</dbReference>
<dbReference type="SUPFAM" id="SSF51045">
    <property type="entry name" value="WW domain"/>
    <property type="match status" value="3"/>
</dbReference>
<dbReference type="PROSITE" id="PS50004">
    <property type="entry name" value="C2"/>
    <property type="match status" value="1"/>
</dbReference>
<dbReference type="PROSITE" id="PS50237">
    <property type="entry name" value="HECT"/>
    <property type="match status" value="1"/>
</dbReference>
<dbReference type="PROSITE" id="PS01159">
    <property type="entry name" value="WW_DOMAIN_1"/>
    <property type="match status" value="1"/>
</dbReference>
<dbReference type="PROSITE" id="PS50020">
    <property type="entry name" value="WW_DOMAIN_2"/>
    <property type="match status" value="3"/>
</dbReference>
<comment type="function">
    <text evidence="2">E3 ubiquitin-protein ligase which accepts ubiquitin from an E2 ubiquitin-conjugating enzyme in the form of a thioester and then directly transfers the ubiquitin to targeted substrates. Interacts with SMAD7 to trigger SMAD7-mediated transforming growth factor beta/TGF-beta receptor ubiquitin-dependent degradation, thereby down-regulating TGF-beta signaling. In addition, interaction with SMAD7 activates autocatalytic degradation, which is prevented by interaction with AIMP1. Also forms a stable complex with TGF-beta receptor-mediated phosphorylated SMAD1, SMAD2 and SMAD3, and targets SMAD1 and SMAD2 for ubiquitination and proteasome-mediated degradation. SMAD2 may recruit substrates, such as SNON, for ubiquitin-dependent degradation. Negatively regulates TGFB1-induced epithelial-mesenchymal transition and myofibroblast differentiation.</text>
</comment>
<comment type="catalytic activity">
    <reaction evidence="2">
        <text>S-ubiquitinyl-[E2 ubiquitin-conjugating enzyme]-L-cysteine + [acceptor protein]-L-lysine = [E2 ubiquitin-conjugating enzyme]-L-cysteine + N(6)-ubiquitinyl-[acceptor protein]-L-lysine.</text>
        <dbReference type="EC" id="2.3.2.26"/>
    </reaction>
</comment>
<comment type="activity regulation">
    <text evidence="1">Activated by NDFIP1- and NDFIP2-binding.</text>
</comment>
<comment type="pathway">
    <text>Protein modification; protein ubiquitination.</text>
</comment>
<comment type="subunit">
    <text evidence="2">Interacts (via WW domains) with SMAD1. Interacts (via WW domains) with SMAD2 (via PY-motif). Interacts (via WW domains) with SMAD3 (via PY-motif). Interacts with SMAD6. Interacts with SMAD7 (via PY-motif) and TGFBR1; SMAD7 recruits SMURF2 to the TGF-beta receptor and regulates its degradation. Does not interact with SMAD4; SMAD4 lacks a PY-motif. Interacts with AIMP1 (By similarity). Interacts with NDFIP1 and NDFIP2; this interaction activates the E3 ubiquitin-protein ligase (By similarity). Interacts with TTC3 (By similarity).</text>
</comment>
<comment type="interaction">
    <interactant intactId="EBI-2348309">
        <id>A2A5Z6</id>
    </interactant>
    <interactant intactId="EBI-740850">
        <id>O14641</id>
        <label>DVL2</label>
    </interactant>
    <organismsDiffer>true</organismsDiffer>
    <experiments>8</experiments>
</comment>
<comment type="subcellular location">
    <subcellularLocation>
        <location evidence="2">Nucleus</location>
    </subcellularLocation>
    <subcellularLocation>
        <location evidence="2">Cytoplasm</location>
    </subcellularLocation>
    <subcellularLocation>
        <location evidence="2">Cell membrane</location>
    </subcellularLocation>
    <subcellularLocation>
        <location evidence="2">Membrane raft</location>
    </subcellularLocation>
    <text evidence="2">Cytoplasmic in the presence of SMAD7. Colocalizes with CAV1, SMAD7 and TGF-beta receptor in membrane rafts.</text>
</comment>
<comment type="alternative products">
    <event type="alternative splicing"/>
    <isoform>
        <id>A2A5Z6-1</id>
        <name>1</name>
        <sequence type="displayed"/>
    </isoform>
    <isoform>
        <id>A2A5Z6-2</id>
        <name>2</name>
        <sequence type="described" ref="VSP_036055 VSP_036056"/>
    </isoform>
</comment>
<comment type="induction">
    <text evidence="6">Up-regulated about ten-fold by activation of the TNF-signaling pathway in vitro.</text>
</comment>
<comment type="domain">
    <text evidence="1">The second and third WW domains are responsible for interaction with the PY-motif of R-SMAD (SMAD1, SMAD2 and SMAD3).</text>
</comment>
<comment type="domain">
    <text evidence="1">The C2 domain is involved in autoinhibition of the catalytic activity by interacting with the HECT domain.</text>
</comment>
<comment type="PTM">
    <text evidence="2">Auto-ubiquitinated and ubiquitinated in the presence of RNF11 and UBE2D1 (By similarity). Ubiquitinated by the SCF(FBXL15) complex and TTC3, leading to its degradation by the proteasome (By similarity). 'Lys-48'-linked polyubiquitination mediated by TRAF4 at Lys-119 leads to SMURF2 proteasomal degradation (By similarity).</text>
</comment>
<comment type="miscellaneous">
    <text evidence="7">Level decreases under the suppression of SCYE1, suggesting that AIMP1 stabilizes SMURF2.</text>
</comment>
<gene>
    <name evidence="9" type="primary">Smurf2</name>
</gene>
<accession>A2A5Z6</accession>
<accession>A2A5Z7</accession>
<accession>Q5IRE6</accession>
<feature type="chain" id="PRO_0000358318" description="E3 ubiquitin-protein ligase SMURF2">
    <location>
        <begin position="1"/>
        <end position="748"/>
    </location>
</feature>
<feature type="domain" description="C2" evidence="3">
    <location>
        <begin position="1"/>
        <end position="119"/>
    </location>
</feature>
<feature type="domain" description="WW 1" evidence="5">
    <location>
        <begin position="157"/>
        <end position="190"/>
    </location>
</feature>
<feature type="domain" description="WW 2" evidence="5">
    <location>
        <begin position="251"/>
        <end position="284"/>
    </location>
</feature>
<feature type="domain" description="WW 3" evidence="5">
    <location>
        <begin position="297"/>
        <end position="330"/>
    </location>
</feature>
<feature type="domain" description="HECT" evidence="4">
    <location>
        <begin position="414"/>
        <end position="748"/>
    </location>
</feature>
<feature type="active site" description="Glycyl thioester intermediate" evidence="4">
    <location>
        <position position="716"/>
    </location>
</feature>
<feature type="cross-link" description="Glycyl lysine isopeptide (Lys-Gly) (interchain with G-Cter in ubiquitin)" evidence="2">
    <location>
        <position position="119"/>
    </location>
</feature>
<feature type="splice variant" id="VSP_036055" description="In isoform 2." evidence="8">
    <location>
        <begin position="18"/>
        <end position="30"/>
    </location>
</feature>
<feature type="splice variant" id="VSP_036056" description="In isoform 2." evidence="8">
    <original>R</original>
    <variation>G</variation>
    <location>
        <position position="31"/>
    </location>
</feature>
<feature type="sequence conflict" description="In Ref. 1; AAV87906." evidence="8" ref="1">
    <original>G</original>
    <variation>V</variation>
    <location>
        <position position="130"/>
    </location>
</feature>
<name>SMUF2_MOUSE</name>
<organism>
    <name type="scientific">Mus musculus</name>
    <name type="common">Mouse</name>
    <dbReference type="NCBI Taxonomy" id="10090"/>
    <lineage>
        <taxon>Eukaryota</taxon>
        <taxon>Metazoa</taxon>
        <taxon>Chordata</taxon>
        <taxon>Craniata</taxon>
        <taxon>Vertebrata</taxon>
        <taxon>Euteleostomi</taxon>
        <taxon>Mammalia</taxon>
        <taxon>Eutheria</taxon>
        <taxon>Euarchontoglires</taxon>
        <taxon>Glires</taxon>
        <taxon>Rodentia</taxon>
        <taxon>Myomorpha</taxon>
        <taxon>Muroidea</taxon>
        <taxon>Muridae</taxon>
        <taxon>Murinae</taxon>
        <taxon>Mus</taxon>
        <taxon>Mus</taxon>
    </lineage>
</organism>